<accession>Q5L0I3</accession>
<comment type="function">
    <text evidence="1">One of the primary rRNA binding proteins, it binds directly to 16S rRNA where it helps nucleate assembly of the platform of the 30S subunit by binding and bridging several RNA helices of the 16S rRNA.</text>
</comment>
<comment type="function">
    <text evidence="1">Forms an intersubunit bridge (bridge B4) with the 23S rRNA of the 50S subunit in the ribosome.</text>
</comment>
<comment type="subunit">
    <text evidence="1">Part of the 30S ribosomal subunit. Forms a bridge to the 50S subunit in the 70S ribosome, contacting the 23S rRNA.</text>
</comment>
<comment type="similarity">
    <text evidence="1">Belongs to the universal ribosomal protein uS15 family.</text>
</comment>
<dbReference type="EMBL" id="BA000043">
    <property type="protein sequence ID" value="BAD75553.1"/>
    <property type="molecule type" value="Genomic_DNA"/>
</dbReference>
<dbReference type="RefSeq" id="WP_011230768.1">
    <property type="nucleotide sequence ID" value="NC_006510.1"/>
</dbReference>
<dbReference type="SMR" id="Q5L0I3"/>
<dbReference type="STRING" id="235909.GK1268"/>
<dbReference type="GeneID" id="32063162"/>
<dbReference type="KEGG" id="gka:GK1268"/>
<dbReference type="eggNOG" id="COG0184">
    <property type="taxonomic scope" value="Bacteria"/>
</dbReference>
<dbReference type="HOGENOM" id="CLU_148518_0_0_9"/>
<dbReference type="Proteomes" id="UP000001172">
    <property type="component" value="Chromosome"/>
</dbReference>
<dbReference type="GO" id="GO:0022627">
    <property type="term" value="C:cytosolic small ribosomal subunit"/>
    <property type="evidence" value="ECO:0007669"/>
    <property type="project" value="TreeGrafter"/>
</dbReference>
<dbReference type="GO" id="GO:0019843">
    <property type="term" value="F:rRNA binding"/>
    <property type="evidence" value="ECO:0007669"/>
    <property type="project" value="UniProtKB-UniRule"/>
</dbReference>
<dbReference type="GO" id="GO:0003735">
    <property type="term" value="F:structural constituent of ribosome"/>
    <property type="evidence" value="ECO:0007669"/>
    <property type="project" value="InterPro"/>
</dbReference>
<dbReference type="GO" id="GO:0006412">
    <property type="term" value="P:translation"/>
    <property type="evidence" value="ECO:0007669"/>
    <property type="project" value="UniProtKB-UniRule"/>
</dbReference>
<dbReference type="CDD" id="cd00353">
    <property type="entry name" value="Ribosomal_S15p_S13e"/>
    <property type="match status" value="1"/>
</dbReference>
<dbReference type="FunFam" id="1.10.287.10:FF:000002">
    <property type="entry name" value="30S ribosomal protein S15"/>
    <property type="match status" value="1"/>
</dbReference>
<dbReference type="Gene3D" id="6.10.250.3130">
    <property type="match status" value="1"/>
</dbReference>
<dbReference type="Gene3D" id="1.10.287.10">
    <property type="entry name" value="S15/NS1, RNA-binding"/>
    <property type="match status" value="1"/>
</dbReference>
<dbReference type="HAMAP" id="MF_01343_B">
    <property type="entry name" value="Ribosomal_uS15_B"/>
    <property type="match status" value="1"/>
</dbReference>
<dbReference type="InterPro" id="IPR000589">
    <property type="entry name" value="Ribosomal_uS15"/>
</dbReference>
<dbReference type="InterPro" id="IPR005290">
    <property type="entry name" value="Ribosomal_uS15_bac-type"/>
</dbReference>
<dbReference type="InterPro" id="IPR009068">
    <property type="entry name" value="uS15_NS1_RNA-bd_sf"/>
</dbReference>
<dbReference type="NCBIfam" id="TIGR00952">
    <property type="entry name" value="S15_bact"/>
    <property type="match status" value="1"/>
</dbReference>
<dbReference type="PANTHER" id="PTHR23321">
    <property type="entry name" value="RIBOSOMAL PROTEIN S15, BACTERIAL AND ORGANELLAR"/>
    <property type="match status" value="1"/>
</dbReference>
<dbReference type="PANTHER" id="PTHR23321:SF26">
    <property type="entry name" value="SMALL RIBOSOMAL SUBUNIT PROTEIN US15M"/>
    <property type="match status" value="1"/>
</dbReference>
<dbReference type="Pfam" id="PF00312">
    <property type="entry name" value="Ribosomal_S15"/>
    <property type="match status" value="1"/>
</dbReference>
<dbReference type="SMART" id="SM01387">
    <property type="entry name" value="Ribosomal_S15"/>
    <property type="match status" value="1"/>
</dbReference>
<dbReference type="SUPFAM" id="SSF47060">
    <property type="entry name" value="S15/NS1 RNA-binding domain"/>
    <property type="match status" value="1"/>
</dbReference>
<dbReference type="PROSITE" id="PS00362">
    <property type="entry name" value="RIBOSOMAL_S15"/>
    <property type="match status" value="1"/>
</dbReference>
<reference key="1">
    <citation type="journal article" date="2004" name="Nucleic Acids Res.">
        <title>Thermoadaptation trait revealed by the genome sequence of thermophilic Geobacillus kaustophilus.</title>
        <authorList>
            <person name="Takami H."/>
            <person name="Takaki Y."/>
            <person name="Chee G.-J."/>
            <person name="Nishi S."/>
            <person name="Shimamura S."/>
            <person name="Suzuki H."/>
            <person name="Matsui S."/>
            <person name="Uchiyama I."/>
        </authorList>
    </citation>
    <scope>NUCLEOTIDE SEQUENCE [LARGE SCALE GENOMIC DNA]</scope>
    <source>
        <strain>HTA426</strain>
    </source>
</reference>
<proteinExistence type="inferred from homology"/>
<evidence type="ECO:0000255" key="1">
    <source>
        <dbReference type="HAMAP-Rule" id="MF_01343"/>
    </source>
</evidence>
<evidence type="ECO:0000305" key="2"/>
<protein>
    <recommendedName>
        <fullName evidence="1">Small ribosomal subunit protein uS15</fullName>
    </recommendedName>
    <alternativeName>
        <fullName evidence="2">30S ribosomal protein S15</fullName>
    </alternativeName>
</protein>
<sequence length="89" mass="10691">MALTQERKREIIEQFKIHENDTGSPEVQVAILTEQINNLNEHLRIHKKDHHSRRGLLKMVGKRRNLLAYLRKKDVARYRELIEKLGLRR</sequence>
<keyword id="KW-1185">Reference proteome</keyword>
<keyword id="KW-0687">Ribonucleoprotein</keyword>
<keyword id="KW-0689">Ribosomal protein</keyword>
<keyword id="KW-0694">RNA-binding</keyword>
<keyword id="KW-0699">rRNA-binding</keyword>
<organism>
    <name type="scientific">Geobacillus kaustophilus (strain HTA426)</name>
    <dbReference type="NCBI Taxonomy" id="235909"/>
    <lineage>
        <taxon>Bacteria</taxon>
        <taxon>Bacillati</taxon>
        <taxon>Bacillota</taxon>
        <taxon>Bacilli</taxon>
        <taxon>Bacillales</taxon>
        <taxon>Anoxybacillaceae</taxon>
        <taxon>Geobacillus</taxon>
        <taxon>Geobacillus thermoleovorans group</taxon>
    </lineage>
</organism>
<feature type="chain" id="PRO_0000115442" description="Small ribosomal subunit protein uS15">
    <location>
        <begin position="1"/>
        <end position="89"/>
    </location>
</feature>
<gene>
    <name evidence="1" type="primary">rpsO</name>
    <name type="ordered locus">GK1268</name>
</gene>
<name>RS15_GEOKA</name>